<proteinExistence type="inferred from homology"/>
<comment type="function">
    <text evidence="1">DNA-dependent ATPase and 5'-3' DNA helicase. Unwinds D-loops, R-loops, forked DNA and G-quadruplex DNA.</text>
</comment>
<comment type="catalytic activity">
    <reaction evidence="1">
        <text>Couples ATP hydrolysis with the unwinding of duplex DNA at the replication fork by translocating in the 5'-3' direction. This creates two antiparallel DNA single strands (ssDNA). The leading ssDNA polymer is the template for DNA polymerase III holoenzyme which synthesizes a continuous strand.</text>
        <dbReference type="EC" id="5.6.2.3"/>
    </reaction>
</comment>
<comment type="catalytic activity">
    <reaction evidence="1">
        <text>ATP + H2O = ADP + phosphate + H(+)</text>
        <dbReference type="Rhea" id="RHEA:13065"/>
        <dbReference type="ChEBI" id="CHEBI:15377"/>
        <dbReference type="ChEBI" id="CHEBI:15378"/>
        <dbReference type="ChEBI" id="CHEBI:30616"/>
        <dbReference type="ChEBI" id="CHEBI:43474"/>
        <dbReference type="ChEBI" id="CHEBI:456216"/>
        <dbReference type="EC" id="5.6.2.3"/>
    </reaction>
</comment>
<comment type="cofactor">
    <cofactor evidence="1">
        <name>[4Fe-4S] cluster</name>
        <dbReference type="ChEBI" id="CHEBI:49883"/>
    </cofactor>
    <text evidence="1">Binds 1 [4Fe-4S] cluster.</text>
</comment>
<comment type="similarity">
    <text evidence="1">Belongs to the helicase family. DinG subfamily. Type 1 sub-subfamily.</text>
</comment>
<dbReference type="EC" id="5.6.2.3" evidence="1"/>
<dbReference type="EMBL" id="AE017220">
    <property type="protein sequence ID" value="AAX64724.1"/>
    <property type="molecule type" value="Genomic_DNA"/>
</dbReference>
<dbReference type="RefSeq" id="WP_001539557.1">
    <property type="nucleotide sequence ID" value="NC_006905.1"/>
</dbReference>
<dbReference type="SMR" id="Q57RD7"/>
<dbReference type="KEGG" id="sec:SCH_0818"/>
<dbReference type="HOGENOM" id="CLU_012117_4_1_6"/>
<dbReference type="Proteomes" id="UP000000538">
    <property type="component" value="Chromosome"/>
</dbReference>
<dbReference type="GO" id="GO:0051539">
    <property type="term" value="F:4 iron, 4 sulfur cluster binding"/>
    <property type="evidence" value="ECO:0007669"/>
    <property type="project" value="UniProtKB-UniRule"/>
</dbReference>
<dbReference type="GO" id="GO:0043139">
    <property type="term" value="F:5'-3' DNA helicase activity"/>
    <property type="evidence" value="ECO:0007669"/>
    <property type="project" value="UniProtKB-UniRule"/>
</dbReference>
<dbReference type="GO" id="GO:0005524">
    <property type="term" value="F:ATP binding"/>
    <property type="evidence" value="ECO:0007669"/>
    <property type="project" value="UniProtKB-UniRule"/>
</dbReference>
<dbReference type="GO" id="GO:0016887">
    <property type="term" value="F:ATP hydrolysis activity"/>
    <property type="evidence" value="ECO:0007669"/>
    <property type="project" value="RHEA"/>
</dbReference>
<dbReference type="GO" id="GO:0003677">
    <property type="term" value="F:DNA binding"/>
    <property type="evidence" value="ECO:0007669"/>
    <property type="project" value="UniProtKB-UniRule"/>
</dbReference>
<dbReference type="GO" id="GO:0033677">
    <property type="term" value="F:DNA/RNA helicase activity"/>
    <property type="evidence" value="ECO:0007669"/>
    <property type="project" value="TreeGrafter"/>
</dbReference>
<dbReference type="GO" id="GO:0046872">
    <property type="term" value="F:metal ion binding"/>
    <property type="evidence" value="ECO:0007669"/>
    <property type="project" value="UniProtKB-KW"/>
</dbReference>
<dbReference type="GO" id="GO:0006281">
    <property type="term" value="P:DNA repair"/>
    <property type="evidence" value="ECO:0007669"/>
    <property type="project" value="TreeGrafter"/>
</dbReference>
<dbReference type="GO" id="GO:0009432">
    <property type="term" value="P:SOS response"/>
    <property type="evidence" value="ECO:0007669"/>
    <property type="project" value="TreeGrafter"/>
</dbReference>
<dbReference type="FunFam" id="3.40.50.300:FF:000685">
    <property type="entry name" value="ATP-dependent DNA helicase DinG"/>
    <property type="match status" value="1"/>
</dbReference>
<dbReference type="FunFam" id="3.40.50.300:FF:000700">
    <property type="entry name" value="ATP-dependent DNA helicase DinG"/>
    <property type="match status" value="1"/>
</dbReference>
<dbReference type="Gene3D" id="3.40.50.300">
    <property type="entry name" value="P-loop containing nucleotide triphosphate hydrolases"/>
    <property type="match status" value="2"/>
</dbReference>
<dbReference type="HAMAP" id="MF_02205">
    <property type="entry name" value="DinG_proteobact"/>
    <property type="match status" value="1"/>
</dbReference>
<dbReference type="InterPro" id="IPR006555">
    <property type="entry name" value="ATP-dep_Helicase_C"/>
</dbReference>
<dbReference type="InterPro" id="IPR011545">
    <property type="entry name" value="DEAD/DEAH_box_helicase_dom"/>
</dbReference>
<dbReference type="InterPro" id="IPR045028">
    <property type="entry name" value="DinG/Rad3-like"/>
</dbReference>
<dbReference type="InterPro" id="IPR039000">
    <property type="entry name" value="DinG_proteobact"/>
</dbReference>
<dbReference type="InterPro" id="IPR014013">
    <property type="entry name" value="Helic_SF1/SF2_ATP-bd_DinG/Rad3"/>
</dbReference>
<dbReference type="InterPro" id="IPR006554">
    <property type="entry name" value="Helicase-like_DEXD_c2"/>
</dbReference>
<dbReference type="InterPro" id="IPR014001">
    <property type="entry name" value="Helicase_ATP-bd"/>
</dbReference>
<dbReference type="InterPro" id="IPR027417">
    <property type="entry name" value="P-loop_NTPase"/>
</dbReference>
<dbReference type="InterPro" id="IPR010614">
    <property type="entry name" value="RAD3-like_helicase_DEAD"/>
</dbReference>
<dbReference type="NCBIfam" id="NF008729">
    <property type="entry name" value="PRK11747.1"/>
    <property type="match status" value="1"/>
</dbReference>
<dbReference type="PANTHER" id="PTHR11472:SF59">
    <property type="entry name" value="ATP-DEPENDENT DNA HELICASE DING"/>
    <property type="match status" value="1"/>
</dbReference>
<dbReference type="PANTHER" id="PTHR11472">
    <property type="entry name" value="DNA REPAIR DEAD HELICASE RAD3/XP-D SUBFAMILY MEMBER"/>
    <property type="match status" value="1"/>
</dbReference>
<dbReference type="Pfam" id="PF00270">
    <property type="entry name" value="DEAD"/>
    <property type="match status" value="1"/>
</dbReference>
<dbReference type="Pfam" id="PF06733">
    <property type="entry name" value="DEAD_2"/>
    <property type="match status" value="1"/>
</dbReference>
<dbReference type="Pfam" id="PF13307">
    <property type="entry name" value="Helicase_C_2"/>
    <property type="match status" value="1"/>
</dbReference>
<dbReference type="SMART" id="SM00487">
    <property type="entry name" value="DEXDc"/>
    <property type="match status" value="1"/>
</dbReference>
<dbReference type="SMART" id="SM00488">
    <property type="entry name" value="DEXDc2"/>
    <property type="match status" value="1"/>
</dbReference>
<dbReference type="SMART" id="SM00491">
    <property type="entry name" value="HELICc2"/>
    <property type="match status" value="1"/>
</dbReference>
<dbReference type="SUPFAM" id="SSF52540">
    <property type="entry name" value="P-loop containing nucleoside triphosphate hydrolases"/>
    <property type="match status" value="1"/>
</dbReference>
<dbReference type="PROSITE" id="PS51193">
    <property type="entry name" value="HELICASE_ATP_BIND_2"/>
    <property type="match status" value="1"/>
</dbReference>
<dbReference type="PROSITE" id="PS51194">
    <property type="entry name" value="HELICASE_CTER"/>
    <property type="match status" value="1"/>
</dbReference>
<keyword id="KW-0004">4Fe-4S</keyword>
<keyword id="KW-0067">ATP-binding</keyword>
<keyword id="KW-0238">DNA-binding</keyword>
<keyword id="KW-0347">Helicase</keyword>
<keyword id="KW-0378">Hydrolase</keyword>
<keyword id="KW-0408">Iron</keyword>
<keyword id="KW-0411">Iron-sulfur</keyword>
<keyword id="KW-0413">Isomerase</keyword>
<keyword id="KW-0479">Metal-binding</keyword>
<keyword id="KW-0547">Nucleotide-binding</keyword>
<feature type="chain" id="PRO_0000101999" description="ATP-dependent DNA helicase DinG">
    <location>
        <begin position="1"/>
        <end position="714"/>
    </location>
</feature>
<feature type="domain" description="Helicase ATP-binding" evidence="1">
    <location>
        <begin position="17"/>
        <end position="294"/>
    </location>
</feature>
<feature type="domain" description="Helicase C-terminal" evidence="1">
    <location>
        <begin position="517"/>
        <end position="698"/>
    </location>
</feature>
<feature type="short sequence motif" description="DEAH box" evidence="1">
    <location>
        <begin position="248"/>
        <end position="251"/>
    </location>
</feature>
<feature type="binding site" evidence="1 2">
    <location>
        <begin position="54"/>
        <end position="61"/>
    </location>
    <ligand>
        <name>ATP</name>
        <dbReference type="ChEBI" id="CHEBI:30616"/>
    </ligand>
</feature>
<feature type="binding site" evidence="1">
    <location>
        <position position="120"/>
    </location>
    <ligand>
        <name>[4Fe-4S] cluster</name>
        <dbReference type="ChEBI" id="CHEBI:49883"/>
    </ligand>
</feature>
<feature type="binding site" evidence="1">
    <location>
        <position position="194"/>
    </location>
    <ligand>
        <name>[4Fe-4S] cluster</name>
        <dbReference type="ChEBI" id="CHEBI:49883"/>
    </ligand>
</feature>
<feature type="binding site" evidence="1">
    <location>
        <position position="199"/>
    </location>
    <ligand>
        <name>[4Fe-4S] cluster</name>
        <dbReference type="ChEBI" id="CHEBI:49883"/>
    </ligand>
</feature>
<feature type="binding site" evidence="1">
    <location>
        <position position="205"/>
    </location>
    <ligand>
        <name>[4Fe-4S] cluster</name>
        <dbReference type="ChEBI" id="CHEBI:49883"/>
    </ligand>
</feature>
<gene>
    <name evidence="1" type="primary">dinG</name>
    <name type="ordered locus">SCH_0818</name>
</gene>
<protein>
    <recommendedName>
        <fullName evidence="1">ATP-dependent DNA helicase DinG</fullName>
        <ecNumber evidence="1">5.6.2.3</ecNumber>
    </recommendedName>
    <alternativeName>
        <fullName evidence="1">DNA 5'-3' helicase subunit DinG</fullName>
    </alternativeName>
</protein>
<evidence type="ECO:0000255" key="1">
    <source>
        <dbReference type="HAMAP-Rule" id="MF_02205"/>
    </source>
</evidence>
<evidence type="ECO:0000305" key="2"/>
<name>DING_SALCH</name>
<reference key="1">
    <citation type="journal article" date="2005" name="Nucleic Acids Res.">
        <title>The genome sequence of Salmonella enterica serovar Choleraesuis, a highly invasive and resistant zoonotic pathogen.</title>
        <authorList>
            <person name="Chiu C.-H."/>
            <person name="Tang P."/>
            <person name="Chu C."/>
            <person name="Hu S."/>
            <person name="Bao Q."/>
            <person name="Yu J."/>
            <person name="Chou Y.-Y."/>
            <person name="Wang H.-S."/>
            <person name="Lee Y.-S."/>
        </authorList>
    </citation>
    <scope>NUCLEOTIDE SEQUENCE [LARGE SCALE GENOMIC DNA]</scope>
    <source>
        <strain>SC-B67</strain>
    </source>
</reference>
<organism>
    <name type="scientific">Salmonella choleraesuis (strain SC-B67)</name>
    <dbReference type="NCBI Taxonomy" id="321314"/>
    <lineage>
        <taxon>Bacteria</taxon>
        <taxon>Pseudomonadati</taxon>
        <taxon>Pseudomonadota</taxon>
        <taxon>Gammaproteobacteria</taxon>
        <taxon>Enterobacterales</taxon>
        <taxon>Enterobacteriaceae</taxon>
        <taxon>Salmonella</taxon>
    </lineage>
</organism>
<sequence>MALTAALKAQIAAWYKALQDQIPDFIPRAPQRQMIADVARTLAGEEGRHLAIEAPTGVGKTLSYLIPGIAIAREEQKTLVVSTANVALQDQIFSKDLPLLRKIIPDLRFTAAFGRGRYVCPRNLAALASSEPTQQDLLAFLDDELTPNNQEEQKRCARLKGDLDGYKWDGLRDHTDIAIDDDLWRRLSTDKASCLNRNCHYYRECPFFVARREIQEAEVVVANHALVMAAMESEAVLPEPKHLLLVLDEGHHLPDVARDALEMSAEITASWYRLQLDLFSKLVATSMEQFRPKTTPPLANPERLNAHCEEVYELIASLNAILNLYMPAAQEAEHRFAMGELPDEVMEICQRLAKLTETLRGLAESFLNDLSEKTGSHDIVRLHRVILQMNWALGMFEAQSKLWRLASMAQSSGAPVSKWATREIREGQLHVWFHCVGIRVSDQLERLLWRSVPHIIVTSATLRSLNSFSRLQEMSGLKEKAGDRFVALDSPFNHVEQGKLVIPQMRYEPTIDNEEQHIAEMAAYFREQLESKKHHGMLVLFASGRAMQRFLEHVADVRLLLLVQGDQPRYRLVELHRKRVESGERSVLVGLQSFAEGLDLKGELLTQVHIHKIAFPPIDSPVVITEGEWLKSLNRYPFEVQSLPSASFNLIQQVGRLIRSHACRGEVVIYDKRLLTKNYGQRLLNALPVFPIEQPAVPDVIVKPKAKPARRRRR</sequence>
<accession>Q57RD7</accession>